<reference key="1">
    <citation type="journal article" date="2004" name="Nat. Genet.">
        <title>Complete sequencing and characterization of 21,243 full-length human cDNAs.</title>
        <authorList>
            <person name="Ota T."/>
            <person name="Suzuki Y."/>
            <person name="Nishikawa T."/>
            <person name="Otsuki T."/>
            <person name="Sugiyama T."/>
            <person name="Irie R."/>
            <person name="Wakamatsu A."/>
            <person name="Hayashi K."/>
            <person name="Sato H."/>
            <person name="Nagai K."/>
            <person name="Kimura K."/>
            <person name="Makita H."/>
            <person name="Sekine M."/>
            <person name="Obayashi M."/>
            <person name="Nishi T."/>
            <person name="Shibahara T."/>
            <person name="Tanaka T."/>
            <person name="Ishii S."/>
            <person name="Yamamoto J."/>
            <person name="Saito K."/>
            <person name="Kawai Y."/>
            <person name="Isono Y."/>
            <person name="Nakamura Y."/>
            <person name="Nagahari K."/>
            <person name="Murakami K."/>
            <person name="Yasuda T."/>
            <person name="Iwayanagi T."/>
            <person name="Wagatsuma M."/>
            <person name="Shiratori A."/>
            <person name="Sudo H."/>
            <person name="Hosoiri T."/>
            <person name="Kaku Y."/>
            <person name="Kodaira H."/>
            <person name="Kondo H."/>
            <person name="Sugawara M."/>
            <person name="Takahashi M."/>
            <person name="Kanda K."/>
            <person name="Yokoi T."/>
            <person name="Furuya T."/>
            <person name="Kikkawa E."/>
            <person name="Omura Y."/>
            <person name="Abe K."/>
            <person name="Kamihara K."/>
            <person name="Katsuta N."/>
            <person name="Sato K."/>
            <person name="Tanikawa M."/>
            <person name="Yamazaki M."/>
            <person name="Ninomiya K."/>
            <person name="Ishibashi T."/>
            <person name="Yamashita H."/>
            <person name="Murakawa K."/>
            <person name="Fujimori K."/>
            <person name="Tanai H."/>
            <person name="Kimata M."/>
            <person name="Watanabe M."/>
            <person name="Hiraoka S."/>
            <person name="Chiba Y."/>
            <person name="Ishida S."/>
            <person name="Ono Y."/>
            <person name="Takiguchi S."/>
            <person name="Watanabe S."/>
            <person name="Yosida M."/>
            <person name="Hotuta T."/>
            <person name="Kusano J."/>
            <person name="Kanehori K."/>
            <person name="Takahashi-Fujii A."/>
            <person name="Hara H."/>
            <person name="Tanase T.-O."/>
            <person name="Nomura Y."/>
            <person name="Togiya S."/>
            <person name="Komai F."/>
            <person name="Hara R."/>
            <person name="Takeuchi K."/>
            <person name="Arita M."/>
            <person name="Imose N."/>
            <person name="Musashino K."/>
            <person name="Yuuki H."/>
            <person name="Oshima A."/>
            <person name="Sasaki N."/>
            <person name="Aotsuka S."/>
            <person name="Yoshikawa Y."/>
            <person name="Matsunawa H."/>
            <person name="Ichihara T."/>
            <person name="Shiohata N."/>
            <person name="Sano S."/>
            <person name="Moriya S."/>
            <person name="Momiyama H."/>
            <person name="Satoh N."/>
            <person name="Takami S."/>
            <person name="Terashima Y."/>
            <person name="Suzuki O."/>
            <person name="Nakagawa S."/>
            <person name="Senoh A."/>
            <person name="Mizoguchi H."/>
            <person name="Goto Y."/>
            <person name="Shimizu F."/>
            <person name="Wakebe H."/>
            <person name="Hishigaki H."/>
            <person name="Watanabe T."/>
            <person name="Sugiyama A."/>
            <person name="Takemoto M."/>
            <person name="Kawakami B."/>
            <person name="Yamazaki M."/>
            <person name="Watanabe K."/>
            <person name="Kumagai A."/>
            <person name="Itakura S."/>
            <person name="Fukuzumi Y."/>
            <person name="Fujimori Y."/>
            <person name="Komiyama M."/>
            <person name="Tashiro H."/>
            <person name="Tanigami A."/>
            <person name="Fujiwara T."/>
            <person name="Ono T."/>
            <person name="Yamada K."/>
            <person name="Fujii Y."/>
            <person name="Ozaki K."/>
            <person name="Hirao M."/>
            <person name="Ohmori Y."/>
            <person name="Kawabata A."/>
            <person name="Hikiji T."/>
            <person name="Kobatake N."/>
            <person name="Inagaki H."/>
            <person name="Ikema Y."/>
            <person name="Okamoto S."/>
            <person name="Okitani R."/>
            <person name="Kawakami T."/>
            <person name="Noguchi S."/>
            <person name="Itoh T."/>
            <person name="Shigeta K."/>
            <person name="Senba T."/>
            <person name="Matsumura K."/>
            <person name="Nakajima Y."/>
            <person name="Mizuno T."/>
            <person name="Morinaga M."/>
            <person name="Sasaki M."/>
            <person name="Togashi T."/>
            <person name="Oyama M."/>
            <person name="Hata H."/>
            <person name="Watanabe M."/>
            <person name="Komatsu T."/>
            <person name="Mizushima-Sugano J."/>
            <person name="Satoh T."/>
            <person name="Shirai Y."/>
            <person name="Takahashi Y."/>
            <person name="Nakagawa K."/>
            <person name="Okumura K."/>
            <person name="Nagase T."/>
            <person name="Nomura N."/>
            <person name="Kikuchi H."/>
            <person name="Masuho Y."/>
            <person name="Yamashita R."/>
            <person name="Nakai K."/>
            <person name="Yada T."/>
            <person name="Nakamura Y."/>
            <person name="Ohara O."/>
            <person name="Isogai T."/>
            <person name="Sugano S."/>
        </authorList>
    </citation>
    <scope>NUCLEOTIDE SEQUENCE [LARGE SCALE MRNA] (ISOFORMS 1 AND 2)</scope>
    <source>
        <tissue>Embryonic head</tissue>
        <tissue>Hepatoma</tissue>
    </source>
</reference>
<reference key="2">
    <citation type="submission" date="2005-09" db="EMBL/GenBank/DDBJ databases">
        <authorList>
            <person name="Mural R.J."/>
            <person name="Istrail S."/>
            <person name="Sutton G.G."/>
            <person name="Florea L."/>
            <person name="Halpern A.L."/>
            <person name="Mobarry C.M."/>
            <person name="Lippert R."/>
            <person name="Walenz B."/>
            <person name="Shatkay H."/>
            <person name="Dew I."/>
            <person name="Miller J.R."/>
            <person name="Flanigan M.J."/>
            <person name="Edwards N.J."/>
            <person name="Bolanos R."/>
            <person name="Fasulo D."/>
            <person name="Halldorsson B.V."/>
            <person name="Hannenhalli S."/>
            <person name="Turner R."/>
            <person name="Yooseph S."/>
            <person name="Lu F."/>
            <person name="Nusskern D.R."/>
            <person name="Shue B.C."/>
            <person name="Zheng X.H."/>
            <person name="Zhong F."/>
            <person name="Delcher A.L."/>
            <person name="Huson D.H."/>
            <person name="Kravitz S.A."/>
            <person name="Mouchard L."/>
            <person name="Reinert K."/>
            <person name="Remington K.A."/>
            <person name="Clark A.G."/>
            <person name="Waterman M.S."/>
            <person name="Eichler E.E."/>
            <person name="Adams M.D."/>
            <person name="Hunkapiller M.W."/>
            <person name="Myers E.W."/>
            <person name="Venter J.C."/>
        </authorList>
    </citation>
    <scope>NUCLEOTIDE SEQUENCE [LARGE SCALE GENOMIC DNA]</scope>
</reference>
<reference key="3">
    <citation type="journal article" date="2004" name="Genome Res.">
        <title>The status, quality, and expansion of the NIH full-length cDNA project: the Mammalian Gene Collection (MGC).</title>
        <authorList>
            <consortium name="The MGC Project Team"/>
        </authorList>
    </citation>
    <scope>NUCLEOTIDE SEQUENCE [LARGE SCALE MRNA] (ISOFORM 1)</scope>
    <source>
        <tissue>Skin</tissue>
    </source>
</reference>
<reference key="4">
    <citation type="submission" date="2006-09" db="PDB data bank">
        <title>Solution structure of the CUE domain in the human CUE domain containing protein 1 (CUEDC1).</title>
        <authorList>
            <consortium name="RIKEN structural genomics initiative (RSGI)"/>
        </authorList>
    </citation>
    <scope>STRUCTURE BY NMR OF 34-96</scope>
</reference>
<keyword id="KW-0002">3D-structure</keyword>
<keyword id="KW-0025">Alternative splicing</keyword>
<keyword id="KW-1267">Proteomics identification</keyword>
<keyword id="KW-1185">Reference proteome</keyword>
<accession>Q9NWM3</accession>
<accession>D3DTZ2</accession>
<accession>Q9NWD0</accession>
<feature type="chain" id="PRO_0000079559" description="CUE domain-containing protein 1">
    <location>
        <begin position="1"/>
        <end position="386"/>
    </location>
</feature>
<feature type="domain" description="CUE" evidence="1">
    <location>
        <begin position="46"/>
        <end position="89"/>
    </location>
</feature>
<feature type="region of interest" description="Disordered" evidence="2">
    <location>
        <begin position="1"/>
        <end position="40"/>
    </location>
</feature>
<feature type="region of interest" description="Disordered" evidence="2">
    <location>
        <begin position="147"/>
        <end position="172"/>
    </location>
</feature>
<feature type="region of interest" description="Disordered" evidence="2">
    <location>
        <begin position="195"/>
        <end position="225"/>
    </location>
</feature>
<feature type="region of interest" description="Disordered" evidence="2">
    <location>
        <begin position="367"/>
        <end position="386"/>
    </location>
</feature>
<feature type="compositionally biased region" description="Low complexity" evidence="2">
    <location>
        <begin position="1"/>
        <end position="10"/>
    </location>
</feature>
<feature type="compositionally biased region" description="Gly residues" evidence="2">
    <location>
        <begin position="11"/>
        <end position="27"/>
    </location>
</feature>
<feature type="compositionally biased region" description="Gly residues" evidence="2">
    <location>
        <begin position="199"/>
        <end position="209"/>
    </location>
</feature>
<feature type="splice variant" id="VSP_010316" description="In isoform 2." evidence="3">
    <location>
        <begin position="233"/>
        <end position="260"/>
    </location>
</feature>
<feature type="sequence variant" id="VAR_050933" description="In dbSNP:rs17762338.">
    <original>R</original>
    <variation>H</variation>
    <location>
        <position position="169"/>
    </location>
</feature>
<feature type="sequence variant" id="VAR_021951" description="In dbSNP:rs2304942.">
    <original>P</original>
    <variation>S</variation>
    <location>
        <position position="205"/>
    </location>
</feature>
<feature type="sequence variant" id="VAR_033765" description="In dbSNP:rs34800498.">
    <original>R</original>
    <variation>Q</variation>
    <location>
        <position position="316"/>
    </location>
</feature>
<feature type="sequence conflict" description="In Ref. 1; BAA91452." evidence="4" ref="1">
    <original>F</original>
    <variation>L</variation>
    <location>
        <position position="47"/>
    </location>
</feature>
<feature type="helix" evidence="5">
    <location>
        <begin position="48"/>
        <end position="57"/>
    </location>
</feature>
<feature type="strand" evidence="5">
    <location>
        <begin position="59"/>
        <end position="61"/>
    </location>
</feature>
<feature type="helix" evidence="5">
    <location>
        <begin position="63"/>
        <end position="73"/>
    </location>
</feature>
<feature type="helix" evidence="5">
    <location>
        <begin position="77"/>
        <end position="89"/>
    </location>
</feature>
<organism>
    <name type="scientific">Homo sapiens</name>
    <name type="common">Human</name>
    <dbReference type="NCBI Taxonomy" id="9606"/>
    <lineage>
        <taxon>Eukaryota</taxon>
        <taxon>Metazoa</taxon>
        <taxon>Chordata</taxon>
        <taxon>Craniata</taxon>
        <taxon>Vertebrata</taxon>
        <taxon>Euteleostomi</taxon>
        <taxon>Mammalia</taxon>
        <taxon>Eutheria</taxon>
        <taxon>Euarchontoglires</taxon>
        <taxon>Primates</taxon>
        <taxon>Haplorrhini</taxon>
        <taxon>Catarrhini</taxon>
        <taxon>Hominidae</taxon>
        <taxon>Homo</taxon>
    </lineage>
</organism>
<name>CUED1_HUMAN</name>
<comment type="interaction">
    <interactant intactId="EBI-5838167">
        <id>Q9NWM3</id>
    </interactant>
    <interactant intactId="EBI-11096309">
        <id>Q9NYB9-2</id>
        <label>ABI2</label>
    </interactant>
    <organismsDiffer>false</organismsDiffer>
    <experiments>3</experiments>
</comment>
<comment type="interaction">
    <interactant intactId="EBI-5838167">
        <id>Q9NWM3</id>
    </interactant>
    <interactant intactId="EBI-5323863">
        <id>Q5S007</id>
        <label>LRRK2</label>
    </interactant>
    <organismsDiffer>false</organismsDiffer>
    <experiments>2</experiments>
</comment>
<comment type="interaction">
    <interactant intactId="EBI-5838167">
        <id>Q9NWM3</id>
    </interactant>
    <interactant intactId="EBI-713635">
        <id>O43639</id>
        <label>NCK2</label>
    </interactant>
    <organismsDiffer>false</organismsDiffer>
    <experiments>3</experiments>
</comment>
<comment type="interaction">
    <interactant intactId="EBI-5838167">
        <id>Q9NWM3</id>
    </interactant>
    <interactant intactId="EBI-741158">
        <id>Q96HA8</id>
        <label>NTAQ1</label>
    </interactant>
    <organismsDiffer>false</organismsDiffer>
    <experiments>3</experiments>
</comment>
<comment type="interaction">
    <interactant intactId="EBI-5838167">
        <id>Q9NWM3</id>
    </interactant>
    <interactant intactId="EBI-358489">
        <id>Q96GM5</id>
        <label>SMARCD1</label>
    </interactant>
    <organismsDiffer>false</organismsDiffer>
    <experiments>3</experiments>
</comment>
<comment type="interaction">
    <interactant intactId="EBI-5838167">
        <id>Q9NWM3</id>
    </interactant>
    <interactant intactId="EBI-347677">
        <id>P62837</id>
        <label>UBE2D2</label>
    </interactant>
    <organismsDiffer>false</organismsDiffer>
    <experiments>3</experiments>
</comment>
<comment type="interaction">
    <interactant intactId="EBI-5838167">
        <id>Q9NWM3</id>
    </interactant>
    <interactant intactId="EBI-2129763">
        <id>Q96LR5</id>
        <label>UBE2E2</label>
    </interactant>
    <organismsDiffer>false</organismsDiffer>
    <experiments>3</experiments>
</comment>
<comment type="alternative products">
    <event type="alternative splicing"/>
    <isoform>
        <id>Q9NWM3-1</id>
        <name>1</name>
        <sequence type="displayed"/>
    </isoform>
    <isoform>
        <id>Q9NWM3-2</id>
        <name>2</name>
        <sequence type="described" ref="VSP_010316"/>
    </isoform>
</comment>
<proteinExistence type="evidence at protein level"/>
<protein>
    <recommendedName>
        <fullName>CUE domain-containing protein 1</fullName>
    </recommendedName>
</protein>
<gene>
    <name type="primary">CUEDC1</name>
</gene>
<dbReference type="EMBL" id="AK000746">
    <property type="protein sequence ID" value="BAA91357.1"/>
    <property type="molecule type" value="mRNA"/>
</dbReference>
<dbReference type="EMBL" id="AK000977">
    <property type="protein sequence ID" value="BAA91452.1"/>
    <property type="molecule type" value="mRNA"/>
</dbReference>
<dbReference type="EMBL" id="CH471109">
    <property type="protein sequence ID" value="EAW94498.1"/>
    <property type="molecule type" value="Genomic_DNA"/>
</dbReference>
<dbReference type="EMBL" id="CH471109">
    <property type="protein sequence ID" value="EAW94501.1"/>
    <property type="molecule type" value="Genomic_DNA"/>
</dbReference>
<dbReference type="EMBL" id="BC056882">
    <property type="protein sequence ID" value="AAH56882.1"/>
    <property type="molecule type" value="mRNA"/>
</dbReference>
<dbReference type="CCDS" id="CCDS11599.1">
    <molecule id="Q9NWM3-1"/>
</dbReference>
<dbReference type="RefSeq" id="NP_001258804.1">
    <molecule id="Q9NWM3-1"/>
    <property type="nucleotide sequence ID" value="NM_001271875.2"/>
</dbReference>
<dbReference type="RefSeq" id="NP_001278954.1">
    <molecule id="Q9NWM3-1"/>
    <property type="nucleotide sequence ID" value="NM_001292025.2"/>
</dbReference>
<dbReference type="RefSeq" id="XP_006721963.1">
    <property type="nucleotide sequence ID" value="XM_006721900.2"/>
</dbReference>
<dbReference type="RefSeq" id="XP_047292016.1">
    <molecule id="Q9NWM3-1"/>
    <property type="nucleotide sequence ID" value="XM_047436060.1"/>
</dbReference>
<dbReference type="RefSeq" id="XP_054172086.1">
    <molecule id="Q9NWM3-1"/>
    <property type="nucleotide sequence ID" value="XM_054316111.1"/>
</dbReference>
<dbReference type="PDB" id="2DHY">
    <property type="method" value="NMR"/>
    <property type="chains" value="A=37-90"/>
</dbReference>
<dbReference type="PDBsum" id="2DHY"/>
<dbReference type="SMR" id="Q9NWM3"/>
<dbReference type="BioGRID" id="135642">
    <property type="interactions" value="117"/>
</dbReference>
<dbReference type="FunCoup" id="Q9NWM3">
    <property type="interactions" value="429"/>
</dbReference>
<dbReference type="IntAct" id="Q9NWM3">
    <property type="interactions" value="71"/>
</dbReference>
<dbReference type="MINT" id="Q9NWM3"/>
<dbReference type="STRING" id="9606.ENSP00000462717"/>
<dbReference type="GlyGen" id="Q9NWM3">
    <property type="glycosylation" value="1 site"/>
</dbReference>
<dbReference type="iPTMnet" id="Q9NWM3"/>
<dbReference type="PhosphoSitePlus" id="Q9NWM3"/>
<dbReference type="BioMuta" id="CUEDC1"/>
<dbReference type="DMDM" id="47116934"/>
<dbReference type="jPOST" id="Q9NWM3"/>
<dbReference type="MassIVE" id="Q9NWM3"/>
<dbReference type="PaxDb" id="9606-ENSP00000462717"/>
<dbReference type="PeptideAtlas" id="Q9NWM3"/>
<dbReference type="ProteomicsDB" id="82953">
    <molecule id="Q9NWM3-1"/>
</dbReference>
<dbReference type="ProteomicsDB" id="82954">
    <molecule id="Q9NWM3-2"/>
</dbReference>
<dbReference type="Pumba" id="Q9NWM3"/>
<dbReference type="Antibodypedia" id="18339">
    <property type="antibodies" value="102 antibodies from 25 providers"/>
</dbReference>
<dbReference type="DNASU" id="404093"/>
<dbReference type="Ensembl" id="ENST00000360238.6">
    <molecule id="Q9NWM3-1"/>
    <property type="protein sequence ID" value="ENSP00000353373.2"/>
    <property type="gene ID" value="ENSG00000180891.13"/>
</dbReference>
<dbReference type="Ensembl" id="ENST00000407144.6">
    <molecule id="Q9NWM3-1"/>
    <property type="protein sequence ID" value="ENSP00000384712.2"/>
    <property type="gene ID" value="ENSG00000180891.13"/>
</dbReference>
<dbReference type="Ensembl" id="ENST00000577830.6">
    <molecule id="Q9NWM3-1"/>
    <property type="protein sequence ID" value="ENSP00000462717.1"/>
    <property type="gene ID" value="ENSG00000180891.13"/>
</dbReference>
<dbReference type="GeneID" id="404093"/>
<dbReference type="KEGG" id="hsa:404093"/>
<dbReference type="MANE-Select" id="ENST00000577830.6">
    <property type="protein sequence ID" value="ENSP00000462717.1"/>
    <property type="RefSeq nucleotide sequence ID" value="NM_001271875.2"/>
    <property type="RefSeq protein sequence ID" value="NP_001258804.1"/>
</dbReference>
<dbReference type="UCSC" id="uc002ivd.3">
    <molecule id="Q9NWM3-1"/>
    <property type="organism name" value="human"/>
</dbReference>
<dbReference type="AGR" id="HGNC:31350"/>
<dbReference type="CTD" id="404093"/>
<dbReference type="DisGeNET" id="404093"/>
<dbReference type="GeneCards" id="CUEDC1"/>
<dbReference type="HGNC" id="HGNC:31350">
    <property type="gene designation" value="CUEDC1"/>
</dbReference>
<dbReference type="HPA" id="ENSG00000180891">
    <property type="expression patterns" value="Low tissue specificity"/>
</dbReference>
<dbReference type="MIM" id="620552">
    <property type="type" value="gene"/>
</dbReference>
<dbReference type="neXtProt" id="NX_Q9NWM3"/>
<dbReference type="OpenTargets" id="ENSG00000180891"/>
<dbReference type="PharmGKB" id="PA134913154"/>
<dbReference type="VEuPathDB" id="HostDB:ENSG00000180891"/>
<dbReference type="eggNOG" id="KOG4588">
    <property type="taxonomic scope" value="Eukaryota"/>
</dbReference>
<dbReference type="GeneTree" id="ENSGT00390000006762"/>
<dbReference type="HOGENOM" id="CLU_064865_0_0_1"/>
<dbReference type="InParanoid" id="Q9NWM3"/>
<dbReference type="OMA" id="TDFKTMF"/>
<dbReference type="OrthoDB" id="5794653at2759"/>
<dbReference type="PAN-GO" id="Q9NWM3">
    <property type="GO annotations" value="0 GO annotations based on evolutionary models"/>
</dbReference>
<dbReference type="PhylomeDB" id="Q9NWM3"/>
<dbReference type="TreeFam" id="TF324332"/>
<dbReference type="PathwayCommons" id="Q9NWM3"/>
<dbReference type="SignaLink" id="Q9NWM3"/>
<dbReference type="SIGNOR" id="Q9NWM3"/>
<dbReference type="BioGRID-ORCS" id="404093">
    <property type="hits" value="31 hits in 1147 CRISPR screens"/>
</dbReference>
<dbReference type="ChiTaRS" id="CUEDC1">
    <property type="organism name" value="human"/>
</dbReference>
<dbReference type="EvolutionaryTrace" id="Q9NWM3"/>
<dbReference type="GenomeRNAi" id="404093"/>
<dbReference type="Pharos" id="Q9NWM3">
    <property type="development level" value="Tbio"/>
</dbReference>
<dbReference type="PRO" id="PR:Q9NWM3"/>
<dbReference type="Proteomes" id="UP000005640">
    <property type="component" value="Chromosome 17"/>
</dbReference>
<dbReference type="RNAct" id="Q9NWM3">
    <property type="molecule type" value="protein"/>
</dbReference>
<dbReference type="Bgee" id="ENSG00000180891">
    <property type="expression patterns" value="Expressed in apex of heart and 171 other cell types or tissues"/>
</dbReference>
<dbReference type="ExpressionAtlas" id="Q9NWM3">
    <property type="expression patterns" value="baseline and differential"/>
</dbReference>
<dbReference type="GO" id="GO:0043130">
    <property type="term" value="F:ubiquitin binding"/>
    <property type="evidence" value="ECO:0007669"/>
    <property type="project" value="InterPro"/>
</dbReference>
<dbReference type="CDD" id="cd14366">
    <property type="entry name" value="CUE_CUED1"/>
    <property type="match status" value="1"/>
</dbReference>
<dbReference type="Gene3D" id="1.10.8.10">
    <property type="entry name" value="DNA helicase RuvA subunit, C-terminal domain"/>
    <property type="match status" value="1"/>
</dbReference>
<dbReference type="InterPro" id="IPR003892">
    <property type="entry name" value="CUE"/>
</dbReference>
<dbReference type="InterPro" id="IPR040195">
    <property type="entry name" value="CUE_CUED1"/>
</dbReference>
<dbReference type="InterPro" id="IPR040192">
    <property type="entry name" value="CUEDC1"/>
</dbReference>
<dbReference type="InterPro" id="IPR009060">
    <property type="entry name" value="UBA-like_sf"/>
</dbReference>
<dbReference type="PANTHER" id="PTHR13467">
    <property type="entry name" value="CUE DOMAIN CONTAINING PROTEIN 1"/>
    <property type="match status" value="1"/>
</dbReference>
<dbReference type="PANTHER" id="PTHR13467:SF3">
    <property type="entry name" value="CUE DOMAIN-CONTAINING PROTEIN 1"/>
    <property type="match status" value="1"/>
</dbReference>
<dbReference type="Pfam" id="PF02845">
    <property type="entry name" value="CUE"/>
    <property type="match status" value="1"/>
</dbReference>
<dbReference type="SMART" id="SM00546">
    <property type="entry name" value="CUE"/>
    <property type="match status" value="1"/>
</dbReference>
<dbReference type="SUPFAM" id="SSF46934">
    <property type="entry name" value="UBA-like"/>
    <property type="match status" value="1"/>
</dbReference>
<dbReference type="PROSITE" id="PS51140">
    <property type="entry name" value="CUE"/>
    <property type="match status" value="1"/>
</dbReference>
<sequence length="386" mass="42258">MTSLFRRSSSGSGGGGTAGARGGGGGTAAPQELNNSRPARQVRRLEFNQAMDDFKTMFPNMDYDIIECVLRANSGAVDATIDQLLQMNLEGGGSSGGVYEDSSDSEDSIPPEILERTLEPDSSDEEPPPVYSPPAYHMHVFDRPYPLAPPTPPPRIDALGSGAPTSQRRYRNWNPPLLGNLPDDFLRILPQQLDSIQGNAGGPKPGSGEGCPPAMAGPGPGDQESRWKQYLEDERIALFLQNEEFMKELQRNRDFLLALERDRLKYESQKSKSSSVAVGNDFGFSSPVPGTGDANPAVSEDALFRDKLKHMGKSTRRKLFELARAFSEKTKMRKSKRKHLLKHQSLGAAASTANLLDDVEGHACDEDFRGRRQEAPKVEEGLREGQ</sequence>
<evidence type="ECO:0000255" key="1">
    <source>
        <dbReference type="PROSITE-ProRule" id="PRU00468"/>
    </source>
</evidence>
<evidence type="ECO:0000256" key="2">
    <source>
        <dbReference type="SAM" id="MobiDB-lite"/>
    </source>
</evidence>
<evidence type="ECO:0000303" key="3">
    <source>
    </source>
</evidence>
<evidence type="ECO:0000305" key="4"/>
<evidence type="ECO:0007829" key="5">
    <source>
        <dbReference type="PDB" id="2DHY"/>
    </source>
</evidence>